<keyword id="KW-0067">ATP-binding</keyword>
<keyword id="KW-0963">Cytoplasm</keyword>
<keyword id="KW-0418">Kinase</keyword>
<keyword id="KW-0547">Nucleotide-binding</keyword>
<keyword id="KW-1185">Reference proteome</keyword>
<keyword id="KW-0808">Transferase</keyword>
<gene>
    <name type="primary">cmk</name>
    <name type="synonym">cdk</name>
    <name type="ordered locus">Saci_0570</name>
</gene>
<reference key="1">
    <citation type="submission" date="1997-05" db="EMBL/GenBank/DDBJ databases">
        <title>The downstream region of the Sulfolobus adk gene comprises the r134- and the cytidylate kinase gene.</title>
        <authorList>
            <person name="Kath T."/>
            <person name="Schaefer G."/>
            <person name="Moll R."/>
        </authorList>
    </citation>
    <scope>NUCLEOTIDE SEQUENCE [GENOMIC DNA]</scope>
    <source>
        <strain>ATCC 33909 / DSM 639 / JCM 8929 / NBRC 15157 / NCIMB 11770</strain>
    </source>
</reference>
<reference key="2">
    <citation type="journal article" date="2005" name="J. Bacteriol.">
        <title>The genome of Sulfolobus acidocaldarius, a model organism of the Crenarchaeota.</title>
        <authorList>
            <person name="Chen L."/>
            <person name="Bruegger K."/>
            <person name="Skovgaard M."/>
            <person name="Redder P."/>
            <person name="She Q."/>
            <person name="Torarinsson E."/>
            <person name="Greve B."/>
            <person name="Awayez M."/>
            <person name="Zibat A."/>
            <person name="Klenk H.-P."/>
            <person name="Garrett R.A."/>
        </authorList>
    </citation>
    <scope>NUCLEOTIDE SEQUENCE [LARGE SCALE GENOMIC DNA]</scope>
    <source>
        <strain>ATCC 33909 / DSM 639 / JCM 8929 / NBRC 15157 / NCIMB 11770</strain>
    </source>
</reference>
<organism>
    <name type="scientific">Sulfolobus acidocaldarius (strain ATCC 33909 / DSM 639 / JCM 8929 / NBRC 15157 / NCIMB 11770)</name>
    <dbReference type="NCBI Taxonomy" id="330779"/>
    <lineage>
        <taxon>Archaea</taxon>
        <taxon>Thermoproteota</taxon>
        <taxon>Thermoprotei</taxon>
        <taxon>Sulfolobales</taxon>
        <taxon>Sulfolobaceae</taxon>
        <taxon>Sulfolobus</taxon>
    </lineage>
</organism>
<dbReference type="EC" id="2.7.4.25"/>
<dbReference type="EMBL" id="Y13049">
    <property type="protein sequence ID" value="CAA73486.1"/>
    <property type="molecule type" value="Genomic_DNA"/>
</dbReference>
<dbReference type="EMBL" id="CP000077">
    <property type="protein sequence ID" value="AAY79962.1"/>
    <property type="molecule type" value="Genomic_DNA"/>
</dbReference>
<dbReference type="RefSeq" id="WP_011277464.1">
    <property type="nucleotide sequence ID" value="NC_007181.1"/>
</dbReference>
<dbReference type="SMR" id="O05982"/>
<dbReference type="STRING" id="330779.Saci_0570"/>
<dbReference type="GeneID" id="14551091"/>
<dbReference type="GeneID" id="78440913"/>
<dbReference type="KEGG" id="sai:Saci_0570"/>
<dbReference type="PATRIC" id="fig|330779.12.peg.549"/>
<dbReference type="eggNOG" id="arCOG01037">
    <property type="taxonomic scope" value="Archaea"/>
</dbReference>
<dbReference type="HOGENOM" id="CLU_079959_1_0_2"/>
<dbReference type="Proteomes" id="UP000001018">
    <property type="component" value="Chromosome"/>
</dbReference>
<dbReference type="GO" id="GO:0005737">
    <property type="term" value="C:cytoplasm"/>
    <property type="evidence" value="ECO:0007669"/>
    <property type="project" value="UniProtKB-SubCell"/>
</dbReference>
<dbReference type="GO" id="GO:0005524">
    <property type="term" value="F:ATP binding"/>
    <property type="evidence" value="ECO:0007669"/>
    <property type="project" value="UniProtKB-UniRule"/>
</dbReference>
<dbReference type="GO" id="GO:0036430">
    <property type="term" value="F:CMP kinase activity"/>
    <property type="evidence" value="ECO:0007669"/>
    <property type="project" value="RHEA"/>
</dbReference>
<dbReference type="GO" id="GO:0036431">
    <property type="term" value="F:dCMP kinase activity"/>
    <property type="evidence" value="ECO:0007669"/>
    <property type="project" value="RHEA"/>
</dbReference>
<dbReference type="GO" id="GO:0006220">
    <property type="term" value="P:pyrimidine nucleotide metabolic process"/>
    <property type="evidence" value="ECO:0007669"/>
    <property type="project" value="UniProtKB-UniRule"/>
</dbReference>
<dbReference type="CDD" id="cd02020">
    <property type="entry name" value="CMPK"/>
    <property type="match status" value="1"/>
</dbReference>
<dbReference type="Gene3D" id="3.40.50.300">
    <property type="entry name" value="P-loop containing nucleotide triphosphate hydrolases"/>
    <property type="match status" value="1"/>
</dbReference>
<dbReference type="HAMAP" id="MF_00239">
    <property type="entry name" value="Cytidyl_kinase_type2"/>
    <property type="match status" value="1"/>
</dbReference>
<dbReference type="InterPro" id="IPR011892">
    <property type="entry name" value="Cyt_kin_arch"/>
</dbReference>
<dbReference type="InterPro" id="IPR011994">
    <property type="entry name" value="Cytidylate_kinase_dom"/>
</dbReference>
<dbReference type="InterPro" id="IPR027417">
    <property type="entry name" value="P-loop_NTPase"/>
</dbReference>
<dbReference type="NCBIfam" id="TIGR02173">
    <property type="entry name" value="cyt_kin_arch"/>
    <property type="match status" value="1"/>
</dbReference>
<dbReference type="Pfam" id="PF13189">
    <property type="entry name" value="Cytidylate_kin2"/>
    <property type="match status" value="1"/>
</dbReference>
<dbReference type="SUPFAM" id="SSF52540">
    <property type="entry name" value="P-loop containing nucleoside triphosphate hydrolases"/>
    <property type="match status" value="1"/>
</dbReference>
<feature type="chain" id="PRO_0000132023" description="Cytidylate kinase">
    <location>
        <begin position="1"/>
        <end position="182"/>
    </location>
</feature>
<feature type="binding site" evidence="1">
    <location>
        <begin position="7"/>
        <end position="15"/>
    </location>
    <ligand>
        <name>ATP</name>
        <dbReference type="ChEBI" id="CHEBI:30616"/>
    </ligand>
</feature>
<feature type="sequence conflict" description="In Ref. 1; CAA73486." evidence="2" ref="1">
    <original>NLHSALSH</original>
    <variation>TYTRLCGIDLLNIYPE</variation>
    <location>
        <begin position="175"/>
        <end position="182"/>
    </location>
</feature>
<name>KCY_SULAC</name>
<proteinExistence type="inferred from homology"/>
<comment type="catalytic activity">
    <reaction>
        <text>CMP + ATP = CDP + ADP</text>
        <dbReference type="Rhea" id="RHEA:11600"/>
        <dbReference type="ChEBI" id="CHEBI:30616"/>
        <dbReference type="ChEBI" id="CHEBI:58069"/>
        <dbReference type="ChEBI" id="CHEBI:60377"/>
        <dbReference type="ChEBI" id="CHEBI:456216"/>
        <dbReference type="EC" id="2.7.4.25"/>
    </reaction>
</comment>
<comment type="catalytic activity">
    <reaction>
        <text>dCMP + ATP = dCDP + ADP</text>
        <dbReference type="Rhea" id="RHEA:25094"/>
        <dbReference type="ChEBI" id="CHEBI:30616"/>
        <dbReference type="ChEBI" id="CHEBI:57566"/>
        <dbReference type="ChEBI" id="CHEBI:58593"/>
        <dbReference type="ChEBI" id="CHEBI:456216"/>
        <dbReference type="EC" id="2.7.4.25"/>
    </reaction>
</comment>
<comment type="subcellular location">
    <subcellularLocation>
        <location evidence="1">Cytoplasm</location>
    </subcellularLocation>
</comment>
<comment type="similarity">
    <text evidence="2">Belongs to the cytidylate kinase family. Type 2 subfamily.</text>
</comment>
<accession>O05982</accession>
<accession>Q4JB67</accession>
<protein>
    <recommendedName>
        <fullName>Cytidylate kinase</fullName>
        <shortName>CK</shortName>
        <ecNumber>2.7.4.25</ecNumber>
    </recommendedName>
    <alternativeName>
        <fullName>Cytidine monophosphate kinase</fullName>
        <shortName>CMP kinase</shortName>
    </alternativeName>
</protein>
<sequence>MKIIISGPPGSGKSSVAKILSSKLSIKYVSAGLIFRDLAKRMNIDIVKLNKLAEDDFEIDKKIDLEMFKLIKSQDNVIIESHIGGWLFHNLSDLSIYLRAPLDVRAKRIASRDHISEDEAIIQIIKRERSHRERFLRYYGIDILDLSVFDLVINTSYLLPEDVADIILGVISRKNLHSALSH</sequence>
<evidence type="ECO:0000250" key="1"/>
<evidence type="ECO:0000305" key="2"/>